<reference key="1">
    <citation type="journal article" date="2008" name="J. Bacteriol.">
        <title>Comparative genome sequence analysis of multidrug-resistant Acinetobacter baumannii.</title>
        <authorList>
            <person name="Adams M.D."/>
            <person name="Goglin K."/>
            <person name="Molyneaux N."/>
            <person name="Hujer K.M."/>
            <person name="Lavender H."/>
            <person name="Jamison J.J."/>
            <person name="MacDonald I.J."/>
            <person name="Martin K.M."/>
            <person name="Russo T."/>
            <person name="Campagnari A.A."/>
            <person name="Hujer A.M."/>
            <person name="Bonomo R.A."/>
            <person name="Gill S.R."/>
        </authorList>
    </citation>
    <scope>NUCLEOTIDE SEQUENCE [LARGE SCALE GENOMIC DNA]</scope>
    <source>
        <strain>AB0057</strain>
    </source>
</reference>
<protein>
    <recommendedName>
        <fullName evidence="1">DNA-directed RNA polymerase subunit beta</fullName>
        <shortName evidence="1">RNAP subunit beta</shortName>
        <ecNumber evidence="1">2.7.7.6</ecNumber>
    </recommendedName>
    <alternativeName>
        <fullName evidence="1">RNA polymerase subunit beta</fullName>
    </alternativeName>
    <alternativeName>
        <fullName evidence="1">Transcriptase subunit beta</fullName>
    </alternativeName>
</protein>
<proteinExistence type="inferred from homology"/>
<evidence type="ECO:0000255" key="1">
    <source>
        <dbReference type="HAMAP-Rule" id="MF_01321"/>
    </source>
</evidence>
<accession>B7I360</accession>
<name>RPOB_ACIB5</name>
<sequence length="1362" mass="151851">MAYSYTEKKRIRKNFGKLPQVMDAPYLLSIQVDSYRTFLQDGKSPKNREDIGLQAAFRSVFPIESYSGNAALEFVEYSLGKPEFDVRECILRGSTYAAPMRVKIRLIIKDRETKSIKDVREQEVYMGEIPLMTENGTFVINGTERVIVSQLHRSPGVFFDHDKGKTHSSGKVLYSARIIPYRGSWLDFEFDAKDLVYVRIDRRRKLLATVVLRALGYNNEQILNLFYEKVPVYLDMGSYQIDLVPERLRGEMAQFDITDNEGKVIVEQGKRINARHVRQMEAAGLTKLSVPDEYLYERITAEDITLRDGEVIAANTLLSHEVMVKLAEGGVKQFNILFTNDIDRGSFVADTLRADLTRDREEALVEIYKVMRPGEPPTKEAAENLFNNLFFSSERYDLSPVGRMKFNRRLGRPYEVGTDQKSREVEGILSHEDIIDVLRTLVEIRNGKGEVDDIDHLGNRRVRSVGEMTENQFRVGLVRVERAVKERLSQAETDNLSPQDLINAKPVAAAIKEFFGSSQLSQFMDQNNPLSEITHKRRVSALGPGGLTRERAGFEVRDVHQTHYGRVCPIETPEGPNIGLINSLSVYAKANDFGFLETPYRKVVDGRVTDDVEYLSAIEEVGTVIAQADSAVDKDGNLTEEFVSVRHQGEFVRMPPEKVTHMDVSAQQVVSVAASLIPFLEHDDANRALMGSNMQRQAVPTLRADKPLVGTGMEANVARDSGVCVIANRGGVIEYVDASRIVIRVNEDEMVAGEAGVDIYNLIKYTRSNQNTCINQNVIVNLGDKVARGDILADGPSTDMGELALGQNMRVAFMTWNGYNYEDSILLSERVLQEDRLTSIHIQELSCVARDTKLGAEEITADIPNVGEAALSKLDESGIVYIGAEVTAGDILVGKVTPKGETQLTPEEKLLRAIFGEKAADVKDSSLRVPSGTKGTVIDVQVFTRDGLEKDDRALAIEKAQLDSYRKDLKEEYKIFEEAARERVIRLLKGQESNGGGSTKRGDKLSEDLLSGLELVDLLEIQPADEAIAERLTQIQVFLKEKSAEIDEKFAEKKRKLATGDELTTGVLKVVKVYLAVKRRIQPGDKMAGRHGNKGVVSNILPVEDMPHDANGVPVDIVLNPLGVPSRMNVGQILETHLGMAAKGLGDKIEKMLKEQRTVLELREFLDKIYNKVGGEQEDLDSLTDEEILALAGNLRAGVPLATPVFDGAEESQIKDLLELADISRTGQTVLFDGRTGEQFDRPVTVGYMYMLKLNHLVDDKMHARSTGSYSLVTQQPLGGKAQFGGQRFGEMEVWALEAYGAAYTLQEMLTVKSDDVEGRTRIYKNIVDGNHYMDPGMPESFNVLTKEIRSLGINIELKNGD</sequence>
<comment type="function">
    <text evidence="1">DNA-dependent RNA polymerase catalyzes the transcription of DNA into RNA using the four ribonucleoside triphosphates as substrates.</text>
</comment>
<comment type="catalytic activity">
    <reaction evidence="1">
        <text>RNA(n) + a ribonucleoside 5'-triphosphate = RNA(n+1) + diphosphate</text>
        <dbReference type="Rhea" id="RHEA:21248"/>
        <dbReference type="Rhea" id="RHEA-COMP:14527"/>
        <dbReference type="Rhea" id="RHEA-COMP:17342"/>
        <dbReference type="ChEBI" id="CHEBI:33019"/>
        <dbReference type="ChEBI" id="CHEBI:61557"/>
        <dbReference type="ChEBI" id="CHEBI:140395"/>
        <dbReference type="EC" id="2.7.7.6"/>
    </reaction>
</comment>
<comment type="subunit">
    <text evidence="1">The RNAP catalytic core consists of 2 alpha, 1 beta, 1 beta' and 1 omega subunit. When a sigma factor is associated with the core the holoenzyme is formed, which can initiate transcription.</text>
</comment>
<comment type="similarity">
    <text evidence="1">Belongs to the RNA polymerase beta chain family.</text>
</comment>
<keyword id="KW-0240">DNA-directed RNA polymerase</keyword>
<keyword id="KW-0548">Nucleotidyltransferase</keyword>
<keyword id="KW-0804">Transcription</keyword>
<keyword id="KW-0808">Transferase</keyword>
<dbReference type="EC" id="2.7.7.6" evidence="1"/>
<dbReference type="EMBL" id="CP001182">
    <property type="protein sequence ID" value="ACJ39795.1"/>
    <property type="molecule type" value="Genomic_DNA"/>
</dbReference>
<dbReference type="RefSeq" id="WP_000331899.1">
    <property type="nucleotide sequence ID" value="NC_011586.2"/>
</dbReference>
<dbReference type="SMR" id="B7I360"/>
<dbReference type="GeneID" id="92892284"/>
<dbReference type="KEGG" id="abn:AB57_06420"/>
<dbReference type="HOGENOM" id="CLU_000524_4_3_6"/>
<dbReference type="Proteomes" id="UP000007094">
    <property type="component" value="Chromosome"/>
</dbReference>
<dbReference type="GO" id="GO:0000428">
    <property type="term" value="C:DNA-directed RNA polymerase complex"/>
    <property type="evidence" value="ECO:0007669"/>
    <property type="project" value="UniProtKB-KW"/>
</dbReference>
<dbReference type="GO" id="GO:0003677">
    <property type="term" value="F:DNA binding"/>
    <property type="evidence" value="ECO:0007669"/>
    <property type="project" value="UniProtKB-UniRule"/>
</dbReference>
<dbReference type="GO" id="GO:0003899">
    <property type="term" value="F:DNA-directed RNA polymerase activity"/>
    <property type="evidence" value="ECO:0007669"/>
    <property type="project" value="UniProtKB-UniRule"/>
</dbReference>
<dbReference type="GO" id="GO:0032549">
    <property type="term" value="F:ribonucleoside binding"/>
    <property type="evidence" value="ECO:0007669"/>
    <property type="project" value="InterPro"/>
</dbReference>
<dbReference type="GO" id="GO:0006351">
    <property type="term" value="P:DNA-templated transcription"/>
    <property type="evidence" value="ECO:0007669"/>
    <property type="project" value="UniProtKB-UniRule"/>
</dbReference>
<dbReference type="CDD" id="cd00653">
    <property type="entry name" value="RNA_pol_B_RPB2"/>
    <property type="match status" value="1"/>
</dbReference>
<dbReference type="FunFam" id="2.40.50.100:FF:000006">
    <property type="entry name" value="DNA-directed RNA polymerase subunit beta"/>
    <property type="match status" value="1"/>
</dbReference>
<dbReference type="FunFam" id="2.40.50.150:FF:000001">
    <property type="entry name" value="DNA-directed RNA polymerase subunit beta"/>
    <property type="match status" value="1"/>
</dbReference>
<dbReference type="FunFam" id="3.90.1110.10:FF:000001">
    <property type="entry name" value="DNA-directed RNA polymerase subunit beta"/>
    <property type="match status" value="1"/>
</dbReference>
<dbReference type="FunFam" id="3.90.1800.10:FF:000001">
    <property type="entry name" value="DNA-directed RNA polymerase subunit beta"/>
    <property type="match status" value="1"/>
</dbReference>
<dbReference type="Gene3D" id="2.40.50.100">
    <property type="match status" value="1"/>
</dbReference>
<dbReference type="Gene3D" id="2.40.50.150">
    <property type="match status" value="1"/>
</dbReference>
<dbReference type="Gene3D" id="3.90.1100.10">
    <property type="match status" value="2"/>
</dbReference>
<dbReference type="Gene3D" id="2.30.150.10">
    <property type="entry name" value="DNA-directed RNA polymerase, beta subunit, external 1 domain"/>
    <property type="match status" value="1"/>
</dbReference>
<dbReference type="Gene3D" id="2.40.270.10">
    <property type="entry name" value="DNA-directed RNA polymerase, subunit 2, domain 6"/>
    <property type="match status" value="2"/>
</dbReference>
<dbReference type="Gene3D" id="3.90.1800.10">
    <property type="entry name" value="RNA polymerase alpha subunit dimerisation domain"/>
    <property type="match status" value="1"/>
</dbReference>
<dbReference type="Gene3D" id="3.90.1110.10">
    <property type="entry name" value="RNA polymerase Rpb2, domain 2"/>
    <property type="match status" value="2"/>
</dbReference>
<dbReference type="HAMAP" id="MF_01321">
    <property type="entry name" value="RNApol_bact_RpoB"/>
    <property type="match status" value="1"/>
</dbReference>
<dbReference type="InterPro" id="IPR042107">
    <property type="entry name" value="DNA-dir_RNA_pol_bsu_ext_1_sf"/>
</dbReference>
<dbReference type="InterPro" id="IPR019462">
    <property type="entry name" value="DNA-dir_RNA_pol_bsu_external_1"/>
</dbReference>
<dbReference type="InterPro" id="IPR015712">
    <property type="entry name" value="DNA-dir_RNA_pol_su2"/>
</dbReference>
<dbReference type="InterPro" id="IPR007120">
    <property type="entry name" value="DNA-dir_RNAP_su2_dom"/>
</dbReference>
<dbReference type="InterPro" id="IPR037033">
    <property type="entry name" value="DNA-dir_RNAP_su2_hyb_sf"/>
</dbReference>
<dbReference type="InterPro" id="IPR010243">
    <property type="entry name" value="RNA_pol_bsu_bac"/>
</dbReference>
<dbReference type="InterPro" id="IPR007121">
    <property type="entry name" value="RNA_pol_bsu_CS"/>
</dbReference>
<dbReference type="InterPro" id="IPR007644">
    <property type="entry name" value="RNA_pol_bsu_protrusion"/>
</dbReference>
<dbReference type="InterPro" id="IPR007642">
    <property type="entry name" value="RNA_pol_Rpb2_2"/>
</dbReference>
<dbReference type="InterPro" id="IPR037034">
    <property type="entry name" value="RNA_pol_Rpb2_2_sf"/>
</dbReference>
<dbReference type="InterPro" id="IPR007645">
    <property type="entry name" value="RNA_pol_Rpb2_3"/>
</dbReference>
<dbReference type="InterPro" id="IPR007641">
    <property type="entry name" value="RNA_pol_Rpb2_7"/>
</dbReference>
<dbReference type="InterPro" id="IPR014724">
    <property type="entry name" value="RNA_pol_RPB2_OB-fold"/>
</dbReference>
<dbReference type="NCBIfam" id="NF001616">
    <property type="entry name" value="PRK00405.1"/>
    <property type="match status" value="1"/>
</dbReference>
<dbReference type="NCBIfam" id="TIGR02013">
    <property type="entry name" value="rpoB"/>
    <property type="match status" value="1"/>
</dbReference>
<dbReference type="PANTHER" id="PTHR20856">
    <property type="entry name" value="DNA-DIRECTED RNA POLYMERASE I SUBUNIT 2"/>
    <property type="match status" value="1"/>
</dbReference>
<dbReference type="Pfam" id="PF04563">
    <property type="entry name" value="RNA_pol_Rpb2_1"/>
    <property type="match status" value="1"/>
</dbReference>
<dbReference type="Pfam" id="PF04561">
    <property type="entry name" value="RNA_pol_Rpb2_2"/>
    <property type="match status" value="2"/>
</dbReference>
<dbReference type="Pfam" id="PF04565">
    <property type="entry name" value="RNA_pol_Rpb2_3"/>
    <property type="match status" value="1"/>
</dbReference>
<dbReference type="Pfam" id="PF10385">
    <property type="entry name" value="RNA_pol_Rpb2_45"/>
    <property type="match status" value="1"/>
</dbReference>
<dbReference type="Pfam" id="PF00562">
    <property type="entry name" value="RNA_pol_Rpb2_6"/>
    <property type="match status" value="1"/>
</dbReference>
<dbReference type="Pfam" id="PF04560">
    <property type="entry name" value="RNA_pol_Rpb2_7"/>
    <property type="match status" value="1"/>
</dbReference>
<dbReference type="SUPFAM" id="SSF64484">
    <property type="entry name" value="beta and beta-prime subunits of DNA dependent RNA-polymerase"/>
    <property type="match status" value="1"/>
</dbReference>
<dbReference type="PROSITE" id="PS01166">
    <property type="entry name" value="RNA_POL_BETA"/>
    <property type="match status" value="1"/>
</dbReference>
<organism>
    <name type="scientific">Acinetobacter baumannii (strain AB0057)</name>
    <dbReference type="NCBI Taxonomy" id="480119"/>
    <lineage>
        <taxon>Bacteria</taxon>
        <taxon>Pseudomonadati</taxon>
        <taxon>Pseudomonadota</taxon>
        <taxon>Gammaproteobacteria</taxon>
        <taxon>Moraxellales</taxon>
        <taxon>Moraxellaceae</taxon>
        <taxon>Acinetobacter</taxon>
        <taxon>Acinetobacter calcoaceticus/baumannii complex</taxon>
    </lineage>
</organism>
<feature type="chain" id="PRO_1000141648" description="DNA-directed RNA polymerase subunit beta">
    <location>
        <begin position="1"/>
        <end position="1362"/>
    </location>
</feature>
<gene>
    <name evidence="1" type="primary">rpoB</name>
    <name type="ordered locus">AB57_0369</name>
</gene>